<evidence type="ECO:0000250" key="1"/>
<evidence type="ECO:0000255" key="2"/>
<evidence type="ECO:0000305" key="3"/>
<proteinExistence type="inferred from homology"/>
<keyword id="KW-0975">Bacterial flagellum</keyword>
<keyword id="KW-0574">Periplasm</keyword>
<keyword id="KW-1185">Reference proteome</keyword>
<keyword id="KW-0732">Signal</keyword>
<reference key="1">
    <citation type="journal article" date="1998" name="Nature">
        <title>The complete genome of the hyperthermophilic bacterium Aquifex aeolicus.</title>
        <authorList>
            <person name="Deckert G."/>
            <person name="Warren P.V."/>
            <person name="Gaasterland T."/>
            <person name="Young W.G."/>
            <person name="Lenox A.L."/>
            <person name="Graham D.E."/>
            <person name="Overbeek R."/>
            <person name="Snead M.A."/>
            <person name="Keller M."/>
            <person name="Aujay M."/>
            <person name="Huber R."/>
            <person name="Feldman R.A."/>
            <person name="Short J.M."/>
            <person name="Olsen G.J."/>
            <person name="Swanson R.V."/>
        </authorList>
    </citation>
    <scope>NUCLEOTIDE SEQUENCE [LARGE SCALE GENOMIC DNA]</scope>
    <source>
        <strain>VF5</strain>
    </source>
</reference>
<organism>
    <name type="scientific">Aquifex aeolicus (strain VF5)</name>
    <dbReference type="NCBI Taxonomy" id="224324"/>
    <lineage>
        <taxon>Bacteria</taxon>
        <taxon>Pseudomonadati</taxon>
        <taxon>Aquificota</taxon>
        <taxon>Aquificia</taxon>
        <taxon>Aquificales</taxon>
        <taxon>Aquificaceae</taxon>
        <taxon>Aquifex</taxon>
    </lineage>
</organism>
<gene>
    <name type="primary">flgI</name>
    <name type="ordered locus">aq_1713</name>
</gene>
<sequence>MACKNIRYIVSLLILVSLTFGARIKDIATIEGNRYNYLIGYGLVVGLKGTGDGKATQFTVQSLANMLRRMGIPVDPRRITVKNVAAVMVTAKVPPYAKAGMRFDVEVSSIGDAKSLEGGTLLMTPLRGPDGKVYAIAQGQVIVGGYEARGRGAAQVKNVPTVGRIPNGAILEKDLPFSADFKEVNIYLDEPDFTTAKNVQDVINRAFGKNIAKAVDSATIRVKIPEGYSPVDFLAKVENLEVSTSSVAKVVIDGRSGIVLLGGNVSIEPVAVAVGSLVVEIKERPEVVQPPPLSPGETKVVPRTEVKVKEEKKRLVQIKGTTVSELVDALNSIGATPREIIQVLQAIKSAGALKAKLEVL</sequence>
<comment type="function">
    <text evidence="1">Assembles around the rod to form the L-ring and probably protects the motor/basal body from shearing forces during rotation.</text>
</comment>
<comment type="subunit">
    <text evidence="1">The basal body constitutes a major portion of the flagellar organelle and consists of four rings (L,P,S, and M) mounted on a central rod.</text>
</comment>
<comment type="subcellular location">
    <subcellularLocation>
        <location evidence="1">Periplasm</location>
    </subcellularLocation>
    <subcellularLocation>
        <location evidence="1">Bacterial flagellum basal body</location>
    </subcellularLocation>
</comment>
<comment type="similarity">
    <text evidence="3">Belongs to the FlgI family.</text>
</comment>
<feature type="signal peptide" evidence="2">
    <location>
        <begin position="1"/>
        <end position="22"/>
    </location>
</feature>
<feature type="chain" id="PRO_0000009493" description="Flagellar P-ring protein">
    <location>
        <begin position="23"/>
        <end position="360"/>
    </location>
</feature>
<accession>O67608</accession>
<protein>
    <recommendedName>
        <fullName>Flagellar P-ring protein</fullName>
    </recommendedName>
    <alternativeName>
        <fullName>Basal body P-ring protein</fullName>
    </alternativeName>
</protein>
<name>FLGI_AQUAE</name>
<dbReference type="EMBL" id="AE000657">
    <property type="protein sequence ID" value="AAC07571.1"/>
    <property type="molecule type" value="Genomic_DNA"/>
</dbReference>
<dbReference type="PIR" id="F70447">
    <property type="entry name" value="F70447"/>
</dbReference>
<dbReference type="RefSeq" id="NP_214174.1">
    <property type="nucleotide sequence ID" value="NC_000918.1"/>
</dbReference>
<dbReference type="RefSeq" id="WP_010881111.1">
    <property type="nucleotide sequence ID" value="NC_000918.1"/>
</dbReference>
<dbReference type="SMR" id="O67608"/>
<dbReference type="FunCoup" id="O67608">
    <property type="interactions" value="39"/>
</dbReference>
<dbReference type="STRING" id="224324.aq_1713"/>
<dbReference type="EnsemblBacteria" id="AAC07571">
    <property type="protein sequence ID" value="AAC07571"/>
    <property type="gene ID" value="aq_1713"/>
</dbReference>
<dbReference type="KEGG" id="aae:aq_1713"/>
<dbReference type="PATRIC" id="fig|224324.8.peg.1315"/>
<dbReference type="eggNOG" id="COG1706">
    <property type="taxonomic scope" value="Bacteria"/>
</dbReference>
<dbReference type="HOGENOM" id="CLU_045235_1_0_0"/>
<dbReference type="InParanoid" id="O67608"/>
<dbReference type="OrthoDB" id="9786431at2"/>
<dbReference type="Proteomes" id="UP000000798">
    <property type="component" value="Chromosome"/>
</dbReference>
<dbReference type="GO" id="GO:0009428">
    <property type="term" value="C:bacterial-type flagellum basal body, distal rod, P ring"/>
    <property type="evidence" value="ECO:0000318"/>
    <property type="project" value="GO_Central"/>
</dbReference>
<dbReference type="GO" id="GO:0030288">
    <property type="term" value="C:outer membrane-bounded periplasmic space"/>
    <property type="evidence" value="ECO:0007669"/>
    <property type="project" value="InterPro"/>
</dbReference>
<dbReference type="GO" id="GO:0005198">
    <property type="term" value="F:structural molecule activity"/>
    <property type="evidence" value="ECO:0007669"/>
    <property type="project" value="InterPro"/>
</dbReference>
<dbReference type="GO" id="GO:0071973">
    <property type="term" value="P:bacterial-type flagellum-dependent cell motility"/>
    <property type="evidence" value="ECO:0000318"/>
    <property type="project" value="GO_Central"/>
</dbReference>
<dbReference type="HAMAP" id="MF_00416">
    <property type="entry name" value="FlgI"/>
    <property type="match status" value="1"/>
</dbReference>
<dbReference type="InterPro" id="IPR001782">
    <property type="entry name" value="Flag_FlgI"/>
</dbReference>
<dbReference type="NCBIfam" id="NF003676">
    <property type="entry name" value="PRK05303.1"/>
    <property type="match status" value="1"/>
</dbReference>
<dbReference type="PANTHER" id="PTHR30381">
    <property type="entry name" value="FLAGELLAR P-RING PERIPLASMIC PROTEIN FLGI"/>
    <property type="match status" value="1"/>
</dbReference>
<dbReference type="PANTHER" id="PTHR30381:SF0">
    <property type="entry name" value="FLAGELLAR P-RING PROTEIN"/>
    <property type="match status" value="1"/>
</dbReference>
<dbReference type="Pfam" id="PF02119">
    <property type="entry name" value="FlgI"/>
    <property type="match status" value="1"/>
</dbReference>
<dbReference type="PRINTS" id="PR01010">
    <property type="entry name" value="FLGPRINGFLGI"/>
</dbReference>